<comment type="function">
    <text evidence="1">Catalyzes the oxidation of 3-carboxy-2-hydroxy-4-methylpentanoate (3-isopropylmalate) to 3-carboxy-4-methyl-2-oxopentanoate. The product decarboxylates to 4-methyl-2 oxopentanoate.</text>
</comment>
<comment type="catalytic activity">
    <reaction evidence="1">
        <text>(2R,3S)-3-isopropylmalate + NAD(+) = 4-methyl-2-oxopentanoate + CO2 + NADH</text>
        <dbReference type="Rhea" id="RHEA:32271"/>
        <dbReference type="ChEBI" id="CHEBI:16526"/>
        <dbReference type="ChEBI" id="CHEBI:17865"/>
        <dbReference type="ChEBI" id="CHEBI:35121"/>
        <dbReference type="ChEBI" id="CHEBI:57540"/>
        <dbReference type="ChEBI" id="CHEBI:57945"/>
        <dbReference type="EC" id="1.1.1.85"/>
    </reaction>
</comment>
<comment type="cofactor">
    <cofactor evidence="1">
        <name>Mg(2+)</name>
        <dbReference type="ChEBI" id="CHEBI:18420"/>
    </cofactor>
    <cofactor evidence="1">
        <name>Mn(2+)</name>
        <dbReference type="ChEBI" id="CHEBI:29035"/>
    </cofactor>
    <text evidence="1">Binds 1 Mg(2+) or Mn(2+) ion per subunit.</text>
</comment>
<comment type="pathway">
    <text evidence="1">Amino-acid biosynthesis; L-leucine biosynthesis; L-leucine from 3-methyl-2-oxobutanoate: step 3/4.</text>
</comment>
<comment type="subunit">
    <text evidence="1">Homodimer.</text>
</comment>
<comment type="subcellular location">
    <subcellularLocation>
        <location evidence="1">Cytoplasm</location>
    </subcellularLocation>
</comment>
<comment type="similarity">
    <text evidence="1">Belongs to the isocitrate and isopropylmalate dehydrogenases family. LeuB type 1 subfamily.</text>
</comment>
<keyword id="KW-0028">Amino-acid biosynthesis</keyword>
<keyword id="KW-0100">Branched-chain amino acid biosynthesis</keyword>
<keyword id="KW-0963">Cytoplasm</keyword>
<keyword id="KW-0432">Leucine biosynthesis</keyword>
<keyword id="KW-0460">Magnesium</keyword>
<keyword id="KW-0464">Manganese</keyword>
<keyword id="KW-0479">Metal-binding</keyword>
<keyword id="KW-0520">NAD</keyword>
<keyword id="KW-0560">Oxidoreductase</keyword>
<keyword id="KW-1185">Reference proteome</keyword>
<organism>
    <name type="scientific">Shouchella clausii (strain KSM-K16)</name>
    <name type="common">Alkalihalobacillus clausii</name>
    <dbReference type="NCBI Taxonomy" id="66692"/>
    <lineage>
        <taxon>Bacteria</taxon>
        <taxon>Bacillati</taxon>
        <taxon>Bacillota</taxon>
        <taxon>Bacilli</taxon>
        <taxon>Bacillales</taxon>
        <taxon>Bacillaceae</taxon>
        <taxon>Shouchella</taxon>
    </lineage>
</organism>
<reference key="1">
    <citation type="submission" date="2003-10" db="EMBL/GenBank/DDBJ databases">
        <title>The complete genome sequence of the alkaliphilic Bacillus clausii KSM-K16.</title>
        <authorList>
            <person name="Takaki Y."/>
            <person name="Kageyama Y."/>
            <person name="Shimamura S."/>
            <person name="Suzuki H."/>
            <person name="Nishi S."/>
            <person name="Hatada Y."/>
            <person name="Kawai S."/>
            <person name="Ito S."/>
            <person name="Horikoshi K."/>
        </authorList>
    </citation>
    <scope>NUCLEOTIDE SEQUENCE [LARGE SCALE GENOMIC DNA]</scope>
    <source>
        <strain>KSM-K16</strain>
    </source>
</reference>
<evidence type="ECO:0000255" key="1">
    <source>
        <dbReference type="HAMAP-Rule" id="MF_01033"/>
    </source>
</evidence>
<proteinExistence type="inferred from homology"/>
<dbReference type="EC" id="1.1.1.85" evidence="1"/>
<dbReference type="EMBL" id="AP006627">
    <property type="protein sequence ID" value="BAD65176.1"/>
    <property type="molecule type" value="Genomic_DNA"/>
</dbReference>
<dbReference type="RefSeq" id="WP_011247484.1">
    <property type="nucleotide sequence ID" value="NC_006582.1"/>
</dbReference>
<dbReference type="SMR" id="Q5WEN4"/>
<dbReference type="STRING" id="66692.ABC2641"/>
<dbReference type="KEGG" id="bcl:ABC2641"/>
<dbReference type="eggNOG" id="COG0473">
    <property type="taxonomic scope" value="Bacteria"/>
</dbReference>
<dbReference type="HOGENOM" id="CLU_031953_0_3_9"/>
<dbReference type="OrthoDB" id="9806254at2"/>
<dbReference type="UniPathway" id="UPA00048">
    <property type="reaction ID" value="UER00072"/>
</dbReference>
<dbReference type="Proteomes" id="UP000001168">
    <property type="component" value="Chromosome"/>
</dbReference>
<dbReference type="GO" id="GO:0005829">
    <property type="term" value="C:cytosol"/>
    <property type="evidence" value="ECO:0007669"/>
    <property type="project" value="TreeGrafter"/>
</dbReference>
<dbReference type="GO" id="GO:0003862">
    <property type="term" value="F:3-isopropylmalate dehydrogenase activity"/>
    <property type="evidence" value="ECO:0007669"/>
    <property type="project" value="UniProtKB-UniRule"/>
</dbReference>
<dbReference type="GO" id="GO:0000287">
    <property type="term" value="F:magnesium ion binding"/>
    <property type="evidence" value="ECO:0007669"/>
    <property type="project" value="InterPro"/>
</dbReference>
<dbReference type="GO" id="GO:0051287">
    <property type="term" value="F:NAD binding"/>
    <property type="evidence" value="ECO:0007669"/>
    <property type="project" value="InterPro"/>
</dbReference>
<dbReference type="GO" id="GO:0009098">
    <property type="term" value="P:L-leucine biosynthetic process"/>
    <property type="evidence" value="ECO:0007669"/>
    <property type="project" value="UniProtKB-UniRule"/>
</dbReference>
<dbReference type="FunFam" id="3.40.718.10:FF:000028">
    <property type="entry name" value="3-isopropylmalate dehydrogenase"/>
    <property type="match status" value="1"/>
</dbReference>
<dbReference type="Gene3D" id="3.40.718.10">
    <property type="entry name" value="Isopropylmalate Dehydrogenase"/>
    <property type="match status" value="1"/>
</dbReference>
<dbReference type="HAMAP" id="MF_01033">
    <property type="entry name" value="LeuB_type1"/>
    <property type="match status" value="1"/>
</dbReference>
<dbReference type="InterPro" id="IPR019818">
    <property type="entry name" value="IsoCit/isopropylmalate_DH_CS"/>
</dbReference>
<dbReference type="InterPro" id="IPR024084">
    <property type="entry name" value="IsoPropMal-DH-like_dom"/>
</dbReference>
<dbReference type="InterPro" id="IPR004429">
    <property type="entry name" value="Isopropylmalate_DH"/>
</dbReference>
<dbReference type="NCBIfam" id="TIGR00169">
    <property type="entry name" value="leuB"/>
    <property type="match status" value="1"/>
</dbReference>
<dbReference type="PANTHER" id="PTHR42979">
    <property type="entry name" value="3-ISOPROPYLMALATE DEHYDROGENASE"/>
    <property type="match status" value="1"/>
</dbReference>
<dbReference type="PANTHER" id="PTHR42979:SF1">
    <property type="entry name" value="3-ISOPROPYLMALATE DEHYDROGENASE"/>
    <property type="match status" value="1"/>
</dbReference>
<dbReference type="Pfam" id="PF00180">
    <property type="entry name" value="Iso_dh"/>
    <property type="match status" value="1"/>
</dbReference>
<dbReference type="SMART" id="SM01329">
    <property type="entry name" value="Iso_dh"/>
    <property type="match status" value="1"/>
</dbReference>
<dbReference type="SUPFAM" id="SSF53659">
    <property type="entry name" value="Isocitrate/Isopropylmalate dehydrogenase-like"/>
    <property type="match status" value="1"/>
</dbReference>
<dbReference type="PROSITE" id="PS00470">
    <property type="entry name" value="IDH_IMDH"/>
    <property type="match status" value="1"/>
</dbReference>
<feature type="chain" id="PRO_0000083637" description="3-isopropylmalate dehydrogenase">
    <location>
        <begin position="1"/>
        <end position="364"/>
    </location>
</feature>
<feature type="binding site" evidence="1">
    <location>
        <begin position="76"/>
        <end position="89"/>
    </location>
    <ligand>
        <name>NAD(+)</name>
        <dbReference type="ChEBI" id="CHEBI:57540"/>
    </ligand>
</feature>
<feature type="binding site" evidence="1">
    <location>
        <position position="96"/>
    </location>
    <ligand>
        <name>substrate</name>
    </ligand>
</feature>
<feature type="binding site" evidence="1">
    <location>
        <position position="106"/>
    </location>
    <ligand>
        <name>substrate</name>
    </ligand>
</feature>
<feature type="binding site" evidence="1">
    <location>
        <position position="134"/>
    </location>
    <ligand>
        <name>substrate</name>
    </ligand>
</feature>
<feature type="binding site" evidence="1">
    <location>
        <position position="223"/>
    </location>
    <ligand>
        <name>Mg(2+)</name>
        <dbReference type="ChEBI" id="CHEBI:18420"/>
    </ligand>
</feature>
<feature type="binding site" evidence="1">
    <location>
        <position position="223"/>
    </location>
    <ligand>
        <name>substrate</name>
    </ligand>
</feature>
<feature type="binding site" evidence="1">
    <location>
        <position position="247"/>
    </location>
    <ligand>
        <name>Mg(2+)</name>
        <dbReference type="ChEBI" id="CHEBI:18420"/>
    </ligand>
</feature>
<feature type="binding site" evidence="1">
    <location>
        <position position="251"/>
    </location>
    <ligand>
        <name>Mg(2+)</name>
        <dbReference type="ChEBI" id="CHEBI:18420"/>
    </ligand>
</feature>
<feature type="binding site" evidence="1">
    <location>
        <begin position="281"/>
        <end position="293"/>
    </location>
    <ligand>
        <name>NAD(+)</name>
        <dbReference type="ChEBI" id="CHEBI:57540"/>
    </ligand>
</feature>
<feature type="site" description="Important for catalysis" evidence="1">
    <location>
        <position position="141"/>
    </location>
</feature>
<feature type="site" description="Important for catalysis" evidence="1">
    <location>
        <position position="191"/>
    </location>
</feature>
<gene>
    <name evidence="1" type="primary">leuB</name>
    <name type="ordered locus">ABC2641</name>
</gene>
<sequence>MEKQILLLPGDGIGPEIIAETKRVLEEIARLYHHTFQFVEGRIGGDAIDATGSPLPEETLDLAKGSDAILLGAVGGPKWDGNAPEKRPEKGLLQIRKALGLYANLRPVRVLKPLMGASTLKEEVLADVDLLIVRELTGGLYFGEPRERRQINGEDGAVDTLLYTRGEIERIVHQAFQFARTRKKRVVSVDKANVLESSRLWREIADEVAREYPDVTLSHMLVDNAAMQLIRDPRQFDVIVTENLFGDILSDEASMITGSLGLLPSASMNTSKVGLFEPVHGSAPDIAGTGAANPLATILSAAMMLQYSFGLADEAKAIEVAVDRVLAQGVRTKDIAKASENAVSTTAITNAVMEALALKSASSR</sequence>
<accession>Q5WEN4</accession>
<name>LEU3_SHOC1</name>
<protein>
    <recommendedName>
        <fullName evidence="1">3-isopropylmalate dehydrogenase</fullName>
        <ecNumber evidence="1">1.1.1.85</ecNumber>
    </recommendedName>
    <alternativeName>
        <fullName evidence="1">3-IPM-DH</fullName>
    </alternativeName>
    <alternativeName>
        <fullName evidence="1">Beta-IPM dehydrogenase</fullName>
        <shortName evidence="1">IMDH</shortName>
    </alternativeName>
</protein>